<sequence>MWIGVVSLFPEMFEAITRYGVTGRAVDQGLLEVDFWNPRDYATDKHRTVDDRPYGGGPGMLMKVATLRPAIAEARRDAERRGCAPARTRVVYLSPQGRRLDQRGVRELADLEALIVVAGRYEGIDERVVEADIDEEWSIGDYVLSGGELPAMVMVDAVSRLVPGVLGHGDSALEDSFSEGLLDCPHYTRPETIDGRQVPDILLSGNHAAIRRWRLKQSLGRTWLRRPELLEGRALDREQQRLLDEFIAEQATSQNVGRTEERRPLEE</sequence>
<feature type="chain" id="PRO_0000257404" description="tRNA (guanine-N(1)-)-methyltransferase">
    <location>
        <begin position="1"/>
        <end position="267"/>
    </location>
</feature>
<feature type="binding site" evidence="1">
    <location>
        <position position="119"/>
    </location>
    <ligand>
        <name>S-adenosyl-L-methionine</name>
        <dbReference type="ChEBI" id="CHEBI:59789"/>
    </ligand>
</feature>
<feature type="binding site" evidence="1">
    <location>
        <begin position="139"/>
        <end position="144"/>
    </location>
    <ligand>
        <name>S-adenosyl-L-methionine</name>
        <dbReference type="ChEBI" id="CHEBI:59789"/>
    </ligand>
</feature>
<protein>
    <recommendedName>
        <fullName evidence="1">tRNA (guanine-N(1)-)-methyltransferase</fullName>
        <ecNumber evidence="1">2.1.1.228</ecNumber>
    </recommendedName>
    <alternativeName>
        <fullName evidence="1">M1G-methyltransferase</fullName>
    </alternativeName>
    <alternativeName>
        <fullName evidence="1">tRNA [GM37] methyltransferase</fullName>
    </alternativeName>
</protein>
<organism>
    <name type="scientific">Chromohalobacter salexigens (strain ATCC BAA-138 / DSM 3043 / CIP 106854 / NCIMB 13768 / 1H11)</name>
    <dbReference type="NCBI Taxonomy" id="290398"/>
    <lineage>
        <taxon>Bacteria</taxon>
        <taxon>Pseudomonadati</taxon>
        <taxon>Pseudomonadota</taxon>
        <taxon>Gammaproteobacteria</taxon>
        <taxon>Oceanospirillales</taxon>
        <taxon>Halomonadaceae</taxon>
        <taxon>Chromohalobacter</taxon>
    </lineage>
</organism>
<name>TRMD_CHRSD</name>
<proteinExistence type="inferred from homology"/>
<keyword id="KW-0963">Cytoplasm</keyword>
<keyword id="KW-0489">Methyltransferase</keyword>
<keyword id="KW-1185">Reference proteome</keyword>
<keyword id="KW-0949">S-adenosyl-L-methionine</keyword>
<keyword id="KW-0808">Transferase</keyword>
<keyword id="KW-0819">tRNA processing</keyword>
<dbReference type="EC" id="2.1.1.228" evidence="1"/>
<dbReference type="EMBL" id="CP000285">
    <property type="protein sequence ID" value="ABE60358.1"/>
    <property type="molecule type" value="Genomic_DNA"/>
</dbReference>
<dbReference type="RefSeq" id="WP_011508304.1">
    <property type="nucleotide sequence ID" value="NC_007963.1"/>
</dbReference>
<dbReference type="SMR" id="Q1QT50"/>
<dbReference type="STRING" id="290398.Csal_3014"/>
<dbReference type="GeneID" id="95335702"/>
<dbReference type="KEGG" id="csa:Csal_3014"/>
<dbReference type="eggNOG" id="COG0336">
    <property type="taxonomic scope" value="Bacteria"/>
</dbReference>
<dbReference type="HOGENOM" id="CLU_047363_0_2_6"/>
<dbReference type="OrthoDB" id="9807416at2"/>
<dbReference type="Proteomes" id="UP000000239">
    <property type="component" value="Chromosome"/>
</dbReference>
<dbReference type="GO" id="GO:0005829">
    <property type="term" value="C:cytosol"/>
    <property type="evidence" value="ECO:0007669"/>
    <property type="project" value="TreeGrafter"/>
</dbReference>
<dbReference type="GO" id="GO:0052906">
    <property type="term" value="F:tRNA (guanine(37)-N1)-methyltransferase activity"/>
    <property type="evidence" value="ECO:0007669"/>
    <property type="project" value="UniProtKB-UniRule"/>
</dbReference>
<dbReference type="GO" id="GO:0002939">
    <property type="term" value="P:tRNA N1-guanine methylation"/>
    <property type="evidence" value="ECO:0007669"/>
    <property type="project" value="TreeGrafter"/>
</dbReference>
<dbReference type="CDD" id="cd18080">
    <property type="entry name" value="TrmD-like"/>
    <property type="match status" value="1"/>
</dbReference>
<dbReference type="FunFam" id="1.10.1270.20:FF:000001">
    <property type="entry name" value="tRNA (guanine-N(1)-)-methyltransferase"/>
    <property type="match status" value="1"/>
</dbReference>
<dbReference type="FunFam" id="3.40.1280.10:FF:000001">
    <property type="entry name" value="tRNA (guanine-N(1)-)-methyltransferase"/>
    <property type="match status" value="1"/>
</dbReference>
<dbReference type="Gene3D" id="3.40.1280.10">
    <property type="match status" value="1"/>
</dbReference>
<dbReference type="Gene3D" id="1.10.1270.20">
    <property type="entry name" value="tRNA(m1g37)methyltransferase, domain 2"/>
    <property type="match status" value="1"/>
</dbReference>
<dbReference type="HAMAP" id="MF_00605">
    <property type="entry name" value="TrmD"/>
    <property type="match status" value="1"/>
</dbReference>
<dbReference type="InterPro" id="IPR029028">
    <property type="entry name" value="Alpha/beta_knot_MTases"/>
</dbReference>
<dbReference type="InterPro" id="IPR023148">
    <property type="entry name" value="tRNA_m1G_MeTrfase_C_sf"/>
</dbReference>
<dbReference type="InterPro" id="IPR002649">
    <property type="entry name" value="tRNA_m1G_MeTrfase_TrmD"/>
</dbReference>
<dbReference type="InterPro" id="IPR029026">
    <property type="entry name" value="tRNA_m1G_MTases_N"/>
</dbReference>
<dbReference type="InterPro" id="IPR016009">
    <property type="entry name" value="tRNA_MeTrfase_TRMD/TRM10"/>
</dbReference>
<dbReference type="NCBIfam" id="NF000648">
    <property type="entry name" value="PRK00026.1"/>
    <property type="match status" value="1"/>
</dbReference>
<dbReference type="NCBIfam" id="TIGR00088">
    <property type="entry name" value="trmD"/>
    <property type="match status" value="1"/>
</dbReference>
<dbReference type="PANTHER" id="PTHR46417">
    <property type="entry name" value="TRNA (GUANINE-N(1)-)-METHYLTRANSFERASE"/>
    <property type="match status" value="1"/>
</dbReference>
<dbReference type="PANTHER" id="PTHR46417:SF1">
    <property type="entry name" value="TRNA (GUANINE-N(1)-)-METHYLTRANSFERASE"/>
    <property type="match status" value="1"/>
</dbReference>
<dbReference type="Pfam" id="PF01746">
    <property type="entry name" value="tRNA_m1G_MT"/>
    <property type="match status" value="1"/>
</dbReference>
<dbReference type="PIRSF" id="PIRSF000386">
    <property type="entry name" value="tRNA_mtase"/>
    <property type="match status" value="1"/>
</dbReference>
<dbReference type="SUPFAM" id="SSF75217">
    <property type="entry name" value="alpha/beta knot"/>
    <property type="match status" value="1"/>
</dbReference>
<reference key="1">
    <citation type="journal article" date="2011" name="Stand. Genomic Sci.">
        <title>Complete genome sequence of the halophilic and highly halotolerant Chromohalobacter salexigens type strain (1H11(T)).</title>
        <authorList>
            <person name="Copeland A."/>
            <person name="O'Connor K."/>
            <person name="Lucas S."/>
            <person name="Lapidus A."/>
            <person name="Berry K.W."/>
            <person name="Detter J.C."/>
            <person name="Del Rio T.G."/>
            <person name="Hammon N."/>
            <person name="Dalin E."/>
            <person name="Tice H."/>
            <person name="Pitluck S."/>
            <person name="Bruce D."/>
            <person name="Goodwin L."/>
            <person name="Han C."/>
            <person name="Tapia R."/>
            <person name="Saunders E."/>
            <person name="Schmutz J."/>
            <person name="Brettin T."/>
            <person name="Larimer F."/>
            <person name="Land M."/>
            <person name="Hauser L."/>
            <person name="Vargas C."/>
            <person name="Nieto J.J."/>
            <person name="Kyrpides N.C."/>
            <person name="Ivanova N."/>
            <person name="Goker M."/>
            <person name="Klenk H.P."/>
            <person name="Csonka L.N."/>
            <person name="Woyke T."/>
        </authorList>
    </citation>
    <scope>NUCLEOTIDE SEQUENCE [LARGE SCALE GENOMIC DNA]</scope>
    <source>
        <strain>ATCC BAA-138 / DSM 3043 / CIP 106854 / NCIMB 13768 / 1H11</strain>
    </source>
</reference>
<gene>
    <name evidence="1" type="primary">trmD</name>
    <name type="ordered locus">Csal_3014</name>
</gene>
<evidence type="ECO:0000255" key="1">
    <source>
        <dbReference type="HAMAP-Rule" id="MF_00605"/>
    </source>
</evidence>
<comment type="function">
    <text evidence="1">Specifically methylates guanosine-37 in various tRNAs.</text>
</comment>
<comment type="catalytic activity">
    <reaction evidence="1">
        <text>guanosine(37) in tRNA + S-adenosyl-L-methionine = N(1)-methylguanosine(37) in tRNA + S-adenosyl-L-homocysteine + H(+)</text>
        <dbReference type="Rhea" id="RHEA:36899"/>
        <dbReference type="Rhea" id="RHEA-COMP:10145"/>
        <dbReference type="Rhea" id="RHEA-COMP:10147"/>
        <dbReference type="ChEBI" id="CHEBI:15378"/>
        <dbReference type="ChEBI" id="CHEBI:57856"/>
        <dbReference type="ChEBI" id="CHEBI:59789"/>
        <dbReference type="ChEBI" id="CHEBI:73542"/>
        <dbReference type="ChEBI" id="CHEBI:74269"/>
        <dbReference type="EC" id="2.1.1.228"/>
    </reaction>
</comment>
<comment type="subunit">
    <text evidence="1">Homodimer.</text>
</comment>
<comment type="subcellular location">
    <subcellularLocation>
        <location evidence="1">Cytoplasm</location>
    </subcellularLocation>
</comment>
<comment type="similarity">
    <text evidence="1">Belongs to the RNA methyltransferase TrmD family.</text>
</comment>
<accession>Q1QT50</accession>